<organismHost>
    <name type="scientific">Odocoileus hemionus</name>
    <name type="common">Mule deer</name>
    <name type="synonym">Cervus hemionus</name>
    <dbReference type="NCBI Taxonomy" id="9872"/>
</organismHost>
<reference key="1">
    <citation type="journal article" date="2005" name="J. Virol.">
        <title>Genome of deerpox virus.</title>
        <authorList>
            <person name="Afonso C.L."/>
            <person name="Delhon G."/>
            <person name="Tulman E.R."/>
            <person name="Lu Z."/>
            <person name="Zsak A."/>
            <person name="Becerra V.M."/>
            <person name="Zsak L."/>
            <person name="Kutish G.F."/>
            <person name="Rock D.L."/>
        </authorList>
    </citation>
    <scope>NUCLEOTIDE SEQUENCE [LARGE SCALE GENOMIC DNA]</scope>
</reference>
<organism>
    <name type="scientific">Deerpox virus (strain W-1170-84)</name>
    <name type="common">DPV</name>
    <dbReference type="NCBI Taxonomy" id="305676"/>
    <lineage>
        <taxon>Viruses</taxon>
        <taxon>Varidnaviria</taxon>
        <taxon>Bamfordvirae</taxon>
        <taxon>Nucleocytoviricota</taxon>
        <taxon>Pokkesviricetes</taxon>
        <taxon>Chitovirales</taxon>
        <taxon>Poxviridae</taxon>
        <taxon>Chordopoxvirinae</taxon>
        <taxon>Cervidpoxvirus</taxon>
        <taxon>Mule deerpox virus</taxon>
    </lineage>
</organism>
<gene>
    <name type="primary">PAPL</name>
    <name type="ordered locus">DpV84gp040</name>
</gene>
<dbReference type="EC" id="2.7.7.19"/>
<dbReference type="EMBL" id="AY689437">
    <property type="protein sequence ID" value="ABI99025.1"/>
    <property type="molecule type" value="Genomic_DNA"/>
</dbReference>
<dbReference type="SMR" id="Q08FE1"/>
<dbReference type="Proteomes" id="UP000162522">
    <property type="component" value="Genome"/>
</dbReference>
<dbReference type="GO" id="GO:0005524">
    <property type="term" value="F:ATP binding"/>
    <property type="evidence" value="ECO:0007669"/>
    <property type="project" value="UniProtKB-KW"/>
</dbReference>
<dbReference type="GO" id="GO:1990817">
    <property type="term" value="F:poly(A) RNA polymerase activity"/>
    <property type="evidence" value="ECO:0007669"/>
    <property type="project" value="UniProtKB-EC"/>
</dbReference>
<dbReference type="GO" id="GO:0006397">
    <property type="term" value="P:mRNA processing"/>
    <property type="evidence" value="ECO:0007669"/>
    <property type="project" value="UniProtKB-KW"/>
</dbReference>
<dbReference type="CDD" id="cd20919">
    <property type="entry name" value="polyA_pol_Pox"/>
    <property type="match status" value="1"/>
</dbReference>
<dbReference type="Gene3D" id="1.20.1270.320">
    <property type="entry name" value="Poxvirus poly(A) polymerase, N domain"/>
    <property type="match status" value="1"/>
</dbReference>
<dbReference type="Gene3D" id="3.30.460.60">
    <property type="entry name" value="Poxvirus poly(A) polymerase, nucleotidyltransferase domain"/>
    <property type="match status" value="1"/>
</dbReference>
<dbReference type="InterPro" id="IPR004976">
    <property type="entry name" value="PolyA_pol_cat_Poxvir"/>
</dbReference>
<dbReference type="InterPro" id="IPR037265">
    <property type="entry name" value="PolyA_pol_cat_sf"/>
</dbReference>
<dbReference type="InterPro" id="IPR024231">
    <property type="entry name" value="PolyA_pol_nucTrfase_Poxvir"/>
</dbReference>
<dbReference type="InterPro" id="IPR038419">
    <property type="entry name" value="PolyA_pol_nucTrfase_sf_Poxvir"/>
</dbReference>
<dbReference type="InterPro" id="IPR024397">
    <property type="entry name" value="Poxvirus_polyA_pol_cat_C"/>
</dbReference>
<dbReference type="InterPro" id="IPR024398">
    <property type="entry name" value="Poxvirus_polyA_pol_cat_N"/>
</dbReference>
<dbReference type="InterPro" id="IPR038337">
    <property type="entry name" value="Poxvirus_polyA_pol_cat_N_sf"/>
</dbReference>
<dbReference type="Pfam" id="PF03296">
    <property type="entry name" value="Pox_polyA_pol"/>
    <property type="match status" value="1"/>
</dbReference>
<dbReference type="Pfam" id="PF12629">
    <property type="entry name" value="Pox_polyA_pol_C"/>
    <property type="match status" value="1"/>
</dbReference>
<dbReference type="Pfam" id="PF12630">
    <property type="entry name" value="Pox_polyA_pol_N"/>
    <property type="match status" value="1"/>
</dbReference>
<dbReference type="PIRSF" id="PIRSF015693">
    <property type="entry name" value="VAC-48L_nuct"/>
    <property type="match status" value="1"/>
</dbReference>
<dbReference type="SUPFAM" id="SSF160957">
    <property type="entry name" value="Poly(A) polymerase catalytic subunit-like"/>
    <property type="match status" value="1"/>
</dbReference>
<comment type="function">
    <text>Polymerase that creates the 3'-poly(A) tail of mRNA's.</text>
</comment>
<comment type="catalytic activity">
    <reaction>
        <text>RNA(n) + ATP = RNA(n)-3'-adenine ribonucleotide + diphosphate</text>
        <dbReference type="Rhea" id="RHEA:11332"/>
        <dbReference type="Rhea" id="RHEA-COMP:14527"/>
        <dbReference type="Rhea" id="RHEA-COMP:17347"/>
        <dbReference type="ChEBI" id="CHEBI:30616"/>
        <dbReference type="ChEBI" id="CHEBI:33019"/>
        <dbReference type="ChEBI" id="CHEBI:140395"/>
        <dbReference type="ChEBI" id="CHEBI:173115"/>
        <dbReference type="EC" id="2.7.7.19"/>
    </reaction>
</comment>
<comment type="subunit">
    <text evidence="1">Heterodimer of a large (catalytic) subunit and a small (regulatory) subunit.</text>
</comment>
<comment type="similarity">
    <text evidence="2">Belongs to the poxviridae poly(A) polymerase catalytic subunit family.</text>
</comment>
<proteinExistence type="inferred from homology"/>
<sequence length="470" mass="54089">MNRHISEILEKYLGRIPSLTEYHTLKSQYKNIHRVNIFNKDIFISLIKKNKKKFFSDIDTSVSEIKKLVFDYFTKQEQTYSIGKLYTIIELQTILVTTYTDILGVLTTKGPDIFSSNVQYNTSSMQKIASDALNSMNIATISDKVMGRHNVSSLVCNVNSLMEEYLRRHNKSCICYGSYSLHLLNPEIKYGDIDILQTNSRTFLIDLAFLIKFITGYNVILLKVPYLKNYMVLKDQNDSHIIDSFNIRQETMQHIPKVLIDNIYIVDPTIQLLSMLKMLSQIDRLEDLAKNPDKLTIRFATLLEYVRNKYGIILNGNSNNMPMPATIDIKKRIITVDTKYYNFAYDKCYVYLDENSLSSDILSLNADDAVDFENVSNSAFLVNDKTLYTYFSNTVLLSGNDKIHEISSRGISAHILIYQALMKHDISIPLTDIVNSLIGRNKQPIYEIIPRDKKTGKHGIIDIEKDIITH</sequence>
<name>PAP1_DPV84</name>
<accession>Q08FE1</accession>
<evidence type="ECO:0000250" key="1"/>
<evidence type="ECO:0000305" key="2"/>
<feature type="chain" id="PRO_0000308930" description="Poly(A) polymerase catalytic subunit">
    <location>
        <begin position="1"/>
        <end position="470"/>
    </location>
</feature>
<feature type="active site" evidence="1">
    <location>
        <position position="192"/>
    </location>
</feature>
<feature type="active site" evidence="1">
    <location>
        <position position="194"/>
    </location>
</feature>
<protein>
    <recommendedName>
        <fullName>Poly(A) polymerase catalytic subunit</fullName>
        <ecNumber>2.7.7.19</ecNumber>
    </recommendedName>
    <alternativeName>
        <fullName>Poly(A) polymerase large subunit</fullName>
        <shortName>PAP-L</shortName>
    </alternativeName>
</protein>
<keyword id="KW-0067">ATP-binding</keyword>
<keyword id="KW-0507">mRNA processing</keyword>
<keyword id="KW-0547">Nucleotide-binding</keyword>
<keyword id="KW-0804">Transcription</keyword>
<keyword id="KW-0808">Transferase</keyword>